<name>CLSA_ECODH</name>
<evidence type="ECO:0000255" key="1">
    <source>
        <dbReference type="HAMAP-Rule" id="MF_00190"/>
    </source>
</evidence>
<gene>
    <name evidence="1" type="primary">clsA</name>
    <name type="synonym">cls</name>
    <name type="ordered locus">ECDH10B_1311</name>
</gene>
<feature type="chain" id="PRO_1000098905" description="Cardiolipin synthase A">
    <location>
        <begin position="1"/>
        <end position="486"/>
    </location>
</feature>
<feature type="transmembrane region" description="Helical" evidence="1">
    <location>
        <begin position="3"/>
        <end position="23"/>
    </location>
</feature>
<feature type="transmembrane region" description="Helical" evidence="1">
    <location>
        <begin position="38"/>
        <end position="58"/>
    </location>
</feature>
<feature type="domain" description="PLD phosphodiesterase 1" evidence="1">
    <location>
        <begin position="219"/>
        <end position="246"/>
    </location>
</feature>
<feature type="domain" description="PLD phosphodiesterase 2" evidence="1">
    <location>
        <begin position="399"/>
        <end position="426"/>
    </location>
</feature>
<feature type="active site" evidence="1">
    <location>
        <position position="224"/>
    </location>
</feature>
<feature type="active site" evidence="1">
    <location>
        <position position="226"/>
    </location>
</feature>
<feature type="active site" evidence="1">
    <location>
        <position position="231"/>
    </location>
</feature>
<feature type="active site" evidence="1">
    <location>
        <position position="404"/>
    </location>
</feature>
<feature type="active site" evidence="1">
    <location>
        <position position="406"/>
    </location>
</feature>
<feature type="active site" evidence="1">
    <location>
        <position position="411"/>
    </location>
</feature>
<accession>B1XAT9</accession>
<sequence length="486" mass="54822">MTTVYTLVSWLAILGYWLLIAGVTLRILMKRRAVPSAMAWLLIIYILPLVGIIAYLAVGELHLGKRRAERARAMWPSTAKWLNDLKACKHIFAEENSSVAAPLFKLCERRQGIAGVKGNQLQLMTESDDVMQALIRDIQLARHNIEMVFYIWQPGGMADQVAESLMAAARRGIHCRLMLDSAGSVAFFRSPWPELMRNAGIEVVEALKVNLMRVFLRRMDLRQHRKMIMIDNYIAYTGSMNMVDPRYFKQDAGVGQWIDLMARMEGPIATAMGIIYSCDWEIETGKRILPPPPDVNIMPFEQASGHTIHTIASGPGFPEDLIHQALLTAAYSAREYLIMTTPYFVPSDDLLHAICTAAQRGVDVSIILPRKNDSMLVGWASRAFFTELLAAGVKIYQFEGGLLHTKSVLVDGELSLVGTVNLDMRSLWLNFEITLAIDDKGFGADLAAVQDDYISRSRLLDARLWLKRPLWQRVAERLFYFFSPLL</sequence>
<keyword id="KW-0997">Cell inner membrane</keyword>
<keyword id="KW-1003">Cell membrane</keyword>
<keyword id="KW-0444">Lipid biosynthesis</keyword>
<keyword id="KW-0443">Lipid metabolism</keyword>
<keyword id="KW-0472">Membrane</keyword>
<keyword id="KW-0594">Phospholipid biosynthesis</keyword>
<keyword id="KW-1208">Phospholipid metabolism</keyword>
<keyword id="KW-0677">Repeat</keyword>
<keyword id="KW-0808">Transferase</keyword>
<keyword id="KW-0812">Transmembrane</keyword>
<keyword id="KW-1133">Transmembrane helix</keyword>
<protein>
    <recommendedName>
        <fullName evidence="1">Cardiolipin synthase A</fullName>
        <shortName evidence="1">CL synthase</shortName>
        <ecNumber evidence="1">2.7.8.-</ecNumber>
    </recommendedName>
</protein>
<proteinExistence type="inferred from homology"/>
<dbReference type="EC" id="2.7.8.-" evidence="1"/>
<dbReference type="EMBL" id="CP000948">
    <property type="protein sequence ID" value="ACB02418.1"/>
    <property type="molecule type" value="Genomic_DNA"/>
</dbReference>
<dbReference type="RefSeq" id="WP_000214516.1">
    <property type="nucleotide sequence ID" value="NC_010473.1"/>
</dbReference>
<dbReference type="SMR" id="B1XAT9"/>
<dbReference type="GeneID" id="93775314"/>
<dbReference type="KEGG" id="ecd:ECDH10B_1311"/>
<dbReference type="HOGENOM" id="CLU_038053_1_0_6"/>
<dbReference type="GO" id="GO:0005886">
    <property type="term" value="C:plasma membrane"/>
    <property type="evidence" value="ECO:0007669"/>
    <property type="project" value="UniProtKB-SubCell"/>
</dbReference>
<dbReference type="GO" id="GO:0008808">
    <property type="term" value="F:cardiolipin synthase activity"/>
    <property type="evidence" value="ECO:0007669"/>
    <property type="project" value="InterPro"/>
</dbReference>
<dbReference type="GO" id="GO:0032049">
    <property type="term" value="P:cardiolipin biosynthetic process"/>
    <property type="evidence" value="ECO:0007669"/>
    <property type="project" value="InterPro"/>
</dbReference>
<dbReference type="CDD" id="cd09152">
    <property type="entry name" value="PLDc_EcCLS_like_1"/>
    <property type="match status" value="1"/>
</dbReference>
<dbReference type="CDD" id="cd09158">
    <property type="entry name" value="PLDc_EcCLS_like_2"/>
    <property type="match status" value="1"/>
</dbReference>
<dbReference type="FunFam" id="3.30.870.10:FF:000002">
    <property type="entry name" value="Cardiolipin synthase A"/>
    <property type="match status" value="1"/>
</dbReference>
<dbReference type="FunFam" id="3.30.870.10:FF:000003">
    <property type="entry name" value="Cardiolipin synthase A"/>
    <property type="match status" value="1"/>
</dbReference>
<dbReference type="Gene3D" id="3.30.870.10">
    <property type="entry name" value="Endonuclease Chain A"/>
    <property type="match status" value="2"/>
</dbReference>
<dbReference type="HAMAP" id="MF_00190">
    <property type="entry name" value="Cardiolipin_synth_ClsA"/>
    <property type="match status" value="1"/>
</dbReference>
<dbReference type="InterPro" id="IPR022924">
    <property type="entry name" value="Cardiolipin_synthase"/>
</dbReference>
<dbReference type="InterPro" id="IPR030840">
    <property type="entry name" value="CL_synthase_A"/>
</dbReference>
<dbReference type="InterPro" id="IPR027379">
    <property type="entry name" value="CLS_N"/>
</dbReference>
<dbReference type="InterPro" id="IPR025202">
    <property type="entry name" value="PLD-like_dom"/>
</dbReference>
<dbReference type="InterPro" id="IPR001736">
    <property type="entry name" value="PLipase_D/transphosphatidylase"/>
</dbReference>
<dbReference type="NCBIfam" id="TIGR04265">
    <property type="entry name" value="bac_cardiolipin"/>
    <property type="match status" value="1"/>
</dbReference>
<dbReference type="PANTHER" id="PTHR21248">
    <property type="entry name" value="CARDIOLIPIN SYNTHASE"/>
    <property type="match status" value="1"/>
</dbReference>
<dbReference type="PANTHER" id="PTHR21248:SF22">
    <property type="entry name" value="PHOSPHOLIPASE D"/>
    <property type="match status" value="1"/>
</dbReference>
<dbReference type="Pfam" id="PF13091">
    <property type="entry name" value="PLDc_2"/>
    <property type="match status" value="2"/>
</dbReference>
<dbReference type="Pfam" id="PF13396">
    <property type="entry name" value="PLDc_N"/>
    <property type="match status" value="1"/>
</dbReference>
<dbReference type="SMART" id="SM00155">
    <property type="entry name" value="PLDc"/>
    <property type="match status" value="2"/>
</dbReference>
<dbReference type="SUPFAM" id="SSF56024">
    <property type="entry name" value="Phospholipase D/nuclease"/>
    <property type="match status" value="2"/>
</dbReference>
<dbReference type="PROSITE" id="PS50035">
    <property type="entry name" value="PLD"/>
    <property type="match status" value="2"/>
</dbReference>
<comment type="function">
    <text evidence="1">Catalyzes the reversible phosphatidyl group transfer from one phosphatidylglycerol molecule to another to form cardiolipin (CL) (diphosphatidylglycerol) and glycerol.</text>
</comment>
<comment type="catalytic activity">
    <reaction evidence="1">
        <text>2 a 1,2-diacyl-sn-glycero-3-phospho-(1'-sn-glycerol) = a cardiolipin + glycerol</text>
        <dbReference type="Rhea" id="RHEA:31451"/>
        <dbReference type="ChEBI" id="CHEBI:17754"/>
        <dbReference type="ChEBI" id="CHEBI:62237"/>
        <dbReference type="ChEBI" id="CHEBI:64716"/>
    </reaction>
</comment>
<comment type="subcellular location">
    <subcellularLocation>
        <location evidence="1">Cell inner membrane</location>
        <topology evidence="1">Multi-pass membrane protein</topology>
    </subcellularLocation>
</comment>
<comment type="similarity">
    <text evidence="1">Belongs to the phospholipase D family. Cardiolipin synthase subfamily. ClsA sub-subfamily.</text>
</comment>
<reference key="1">
    <citation type="journal article" date="2008" name="J. Bacteriol.">
        <title>The complete genome sequence of Escherichia coli DH10B: insights into the biology of a laboratory workhorse.</title>
        <authorList>
            <person name="Durfee T."/>
            <person name="Nelson R."/>
            <person name="Baldwin S."/>
            <person name="Plunkett G. III"/>
            <person name="Burland V."/>
            <person name="Mau B."/>
            <person name="Petrosino J.F."/>
            <person name="Qin X."/>
            <person name="Muzny D.M."/>
            <person name="Ayele M."/>
            <person name="Gibbs R.A."/>
            <person name="Csorgo B."/>
            <person name="Posfai G."/>
            <person name="Weinstock G.M."/>
            <person name="Blattner F.R."/>
        </authorList>
    </citation>
    <scope>NUCLEOTIDE SEQUENCE [LARGE SCALE GENOMIC DNA]</scope>
    <source>
        <strain>K12 / DH10B</strain>
    </source>
</reference>
<organism>
    <name type="scientific">Escherichia coli (strain K12 / DH10B)</name>
    <dbReference type="NCBI Taxonomy" id="316385"/>
    <lineage>
        <taxon>Bacteria</taxon>
        <taxon>Pseudomonadati</taxon>
        <taxon>Pseudomonadota</taxon>
        <taxon>Gammaproteobacteria</taxon>
        <taxon>Enterobacterales</taxon>
        <taxon>Enterobacteriaceae</taxon>
        <taxon>Escherichia</taxon>
    </lineage>
</organism>